<organism>
    <name type="scientific">Pneumococcus phage Dp-1</name>
    <name type="common">Bacteriophage Dp-1</name>
    <dbReference type="NCBI Taxonomy" id="59241"/>
    <lineage>
        <taxon>Viruses</taxon>
        <taxon>Duplodnaviria</taxon>
        <taxon>Heunggongvirae</taxon>
        <taxon>Uroviricota</taxon>
        <taxon>Caudoviricetes</taxon>
    </lineage>
</organism>
<proteinExistence type="evidence at protein level"/>
<sequence length="296" mass="34453">MGVDIEKGVAWMQARKGRVSYSMDFRDGPDSYDCSSSMYYALRSAGASSAGWAVNTEYMHAWLIENGYELISENAPWDAKRGDIFIWGRKGASAGAGGHTGMFIDSDNIIHCNYAYDGISVNDHDERWYYAGQPYYYVYRLTNANAQPAEKKLGWQKDATGFWYARANGTYPKDEFEYIEENKSWFYFDDQGYMLAEKWLKHTDGNWYWFDRDGYMATSWKRIGESWYYFNRDGSMVTGWIKYYDNWYYCDATNGDMKSNAFIRYNDGWYLLLPDGRLADKPQFTVEPDGLITAKV</sequence>
<comment type="function">
    <text>Lysis of bacterial host cell wall.</text>
</comment>
<comment type="catalytic activity">
    <reaction>
        <text>Hydrolyzes the link between N-acetylmuramoyl residues and L-amino acid residues in certain cell-wall glycopeptides.</text>
        <dbReference type="EC" id="3.5.1.28"/>
    </reaction>
</comment>
<comment type="subcellular location">
    <subcellularLocation>
        <location>Host cell wall</location>
    </subcellularLocation>
    <text>Binds to the choline residues present in the cell wall substrate.</text>
</comment>
<comment type="pharmaceutical">
    <text>May have a use in the prevention of pneumococcal disease. Pal acts very effectively in killing 15 common serotypes of pneumococci, including highly penicillin-resistant strains. It could be used to eliminate the nasopharyngeal reservoir of these bacteria.</text>
</comment>
<comment type="similarity">
    <text evidence="1">Belongs to the peptidase C40 family.</text>
</comment>
<reference key="1">
    <citation type="journal article" date="1997" name="Mol. Microbiol.">
        <title>The lytic enzyme of the pneumococcal phage Dp-1: a chimeric lysin of intergeneric origin.</title>
        <authorList>
            <person name="Sheehan M.M."/>
            <person name="Garcia J.L."/>
            <person name="Lopez R."/>
            <person name="Garcia P."/>
        </authorList>
    </citation>
    <scope>NUCLEOTIDE SEQUENCE [GENOMIC DNA]</scope>
</reference>
<reference key="2">
    <citation type="journal article" date="2001" name="Science">
        <title>Rapid killing of Streptococcus pneumoniae with a bacteriophage cell wall hydrolase.</title>
        <authorList>
            <person name="Loeffler J.M."/>
            <person name="Nelson D."/>
            <person name="Fischetti V.A."/>
        </authorList>
    </citation>
    <scope>USE OF PAL IN ERADICATION OF S.PNEUMONIAE</scope>
</reference>
<dbReference type="EC" id="3.5.1.28"/>
<dbReference type="EMBL" id="Z93946">
    <property type="protein sequence ID" value="CAB07986.1"/>
    <property type="molecule type" value="Genomic_DNA"/>
</dbReference>
<dbReference type="RefSeq" id="YP_004306947.1">
    <property type="nucleotide sequence ID" value="NC_015274.1"/>
</dbReference>
<dbReference type="SMR" id="O03979"/>
<dbReference type="KEGG" id="vg:10358655"/>
<dbReference type="OrthoDB" id="3568at10239"/>
<dbReference type="GO" id="GO:0044158">
    <property type="term" value="C:host cell wall"/>
    <property type="evidence" value="ECO:0007669"/>
    <property type="project" value="UniProtKB-SubCell"/>
</dbReference>
<dbReference type="GO" id="GO:0008234">
    <property type="term" value="F:cysteine-type peptidase activity"/>
    <property type="evidence" value="ECO:0007669"/>
    <property type="project" value="UniProtKB-KW"/>
</dbReference>
<dbReference type="GO" id="GO:0008745">
    <property type="term" value="F:N-acetylmuramoyl-L-alanine amidase activity"/>
    <property type="evidence" value="ECO:0007669"/>
    <property type="project" value="UniProtKB-EC"/>
</dbReference>
<dbReference type="GO" id="GO:0071555">
    <property type="term" value="P:cell wall organization"/>
    <property type="evidence" value="ECO:0007669"/>
    <property type="project" value="UniProtKB-KW"/>
</dbReference>
<dbReference type="GO" id="GO:0042742">
    <property type="term" value="P:defense response to bacterium"/>
    <property type="evidence" value="ECO:0007669"/>
    <property type="project" value="UniProtKB-KW"/>
</dbReference>
<dbReference type="GO" id="GO:0006508">
    <property type="term" value="P:proteolysis"/>
    <property type="evidence" value="ECO:0007669"/>
    <property type="project" value="UniProtKB-KW"/>
</dbReference>
<dbReference type="GO" id="GO:0044659">
    <property type="term" value="P:viral release from host cell by cytolysis"/>
    <property type="evidence" value="ECO:0000314"/>
    <property type="project" value="CACAO"/>
</dbReference>
<dbReference type="Gene3D" id="2.10.270.10">
    <property type="entry name" value="Cholin Binding"/>
    <property type="match status" value="1"/>
</dbReference>
<dbReference type="Gene3D" id="3.90.1720.10">
    <property type="entry name" value="endopeptidase domain like (from Nostoc punctiforme)"/>
    <property type="match status" value="1"/>
</dbReference>
<dbReference type="Gene3D" id="2.20.120.10">
    <property type="entry name" value="Multimodular pneumococcal cell wall endolysin, domain 3"/>
    <property type="match status" value="1"/>
</dbReference>
<dbReference type="InterPro" id="IPR018337">
    <property type="entry name" value="Cell_wall/Cho-bd_repeat"/>
</dbReference>
<dbReference type="InterPro" id="IPR000064">
    <property type="entry name" value="NLP_P60_dom"/>
</dbReference>
<dbReference type="InterPro" id="IPR038765">
    <property type="entry name" value="Papain-like_cys_pep_sf"/>
</dbReference>
<dbReference type="InterPro" id="IPR008044">
    <property type="entry name" value="Phage_lysin"/>
</dbReference>
<dbReference type="Pfam" id="PF05382">
    <property type="entry name" value="Amidase_5"/>
    <property type="match status" value="1"/>
</dbReference>
<dbReference type="Pfam" id="PF01473">
    <property type="entry name" value="Choline_bind_1"/>
    <property type="match status" value="2"/>
</dbReference>
<dbReference type="Pfam" id="PF19127">
    <property type="entry name" value="Choline_bind_3"/>
    <property type="match status" value="1"/>
</dbReference>
<dbReference type="SUPFAM" id="SSF69360">
    <property type="entry name" value="Cell wall binding repeat"/>
    <property type="match status" value="1"/>
</dbReference>
<dbReference type="SUPFAM" id="SSF54001">
    <property type="entry name" value="Cysteine proteinases"/>
    <property type="match status" value="1"/>
</dbReference>
<dbReference type="PROSITE" id="PS51170">
    <property type="entry name" value="CW"/>
    <property type="match status" value="6"/>
</dbReference>
<dbReference type="PROSITE" id="PS51935">
    <property type="entry name" value="NLPC_P60"/>
    <property type="match status" value="1"/>
</dbReference>
<protein>
    <recommendedName>
        <fullName>Lysin</fullName>
        <ecNumber>3.5.1.28</ecNumber>
    </recommendedName>
    <alternativeName>
        <fullName>Cell wall hydrolase</fullName>
    </alternativeName>
    <alternativeName>
        <fullName>Lytic amidase</fullName>
    </alternativeName>
    <alternativeName>
        <fullName>N-acetylmuramoyl-L-alanine amidase</fullName>
    </alternativeName>
</protein>
<feature type="chain" id="PRO_0000164428" description="Lysin">
    <location>
        <begin position="1"/>
        <end position="296"/>
    </location>
</feature>
<feature type="domain" description="NlpC/P60" evidence="1">
    <location>
        <begin position="1"/>
        <end position="142"/>
    </location>
</feature>
<feature type="repeat" description="Cell wall-binding 1">
    <location>
        <begin position="152"/>
        <end position="171"/>
    </location>
</feature>
<feature type="repeat" description="Cell wall-binding 2">
    <location>
        <begin position="173"/>
        <end position="194"/>
    </location>
</feature>
<feature type="repeat" description="Cell wall-binding 3">
    <location>
        <begin position="196"/>
        <end position="216"/>
    </location>
</feature>
<feature type="repeat" description="Cell wall-binding 4">
    <location>
        <begin position="217"/>
        <end position="236"/>
    </location>
</feature>
<feature type="repeat" description="Cell wall-binding 5">
    <location>
        <begin position="237"/>
        <end position="256"/>
    </location>
</feature>
<feature type="repeat" description="Cell wall-binding 6">
    <location>
        <begin position="259"/>
        <end position="278"/>
    </location>
</feature>
<feature type="active site" description="Nucleophile" evidence="1">
    <location>
        <position position="34"/>
    </location>
</feature>
<feature type="active site" description="Proton acceptor" evidence="1">
    <location>
        <position position="99"/>
    </location>
</feature>
<feature type="active site" evidence="1">
    <location>
        <position position="111"/>
    </location>
</feature>
<evidence type="ECO:0000255" key="1">
    <source>
        <dbReference type="PROSITE-ProRule" id="PRU01284"/>
    </source>
</evidence>
<name>ALYS_BPDP1</name>
<organismHost>
    <name type="scientific">Streptococcus pneumoniae</name>
    <dbReference type="NCBI Taxonomy" id="1313"/>
</organismHost>
<gene>
    <name type="primary">PAL</name>
</gene>
<keyword id="KW-0929">Antimicrobial</keyword>
<keyword id="KW-0081">Bacteriolytic enzyme</keyword>
<keyword id="KW-0961">Cell wall biogenesis/degradation</keyword>
<keyword id="KW-0378">Hydrolase</keyword>
<keyword id="KW-0582">Pharmaceutical</keyword>
<keyword id="KW-0645">Protease</keyword>
<keyword id="KW-0677">Repeat</keyword>
<keyword id="KW-0788">Thiol protease</keyword>
<accession>O03979</accession>